<gene>
    <name type="primary">TSGA10IP</name>
</gene>
<proteinExistence type="evidence at transcript level"/>
<sequence length="556" mass="62853">MGQETNMLNAHQQLVRTSSGRPGHDKRQQTPGTATGLLKLLSSTPYAEQRSLGSGDGVIHAQKQRSRSAGQTPKKDRRLRGRNKKGQSSAEAEDVVPSSPRKPSFPFQWAWESFTTDGRALHQPSSVLAPGHQALPLPLAVHHHKSRRKSTPALPEAHSFCWKTEEPNLERRQQLRACSCTSIPPGRGTSQELEPSGEGGLQSPRKSSGSGLEPEESEPEGLGAEEAERGLIPGELPQLPRRGLILEEEQFSEATEEAEDGEHRAPWRRRTSSRRKGRNSGEEAWEESEVRRLESVSSSTNLREPQRRKPRAKELEGPWDLEKLQRKLQQELDCGPEKQPWKSLRAAVQASNWSRKAHPLGDDETFLFANFPNRTFHKRQEATRNLLRAWELQQREEQQQAEVRRAREQRVQHQVARCLAAYAPRGSRGPGAAQRKLEELRRQERQRFVEYQAELQGIQHRVQARPYLFQQAMQANARLNVTRRFSQVLSALGLDEEQLLAKAGKRDMEGAPRRHRSHRSVGARMEPSSQSPPKMEPTGSQADQHFAPNPDQELSP</sequence>
<evidence type="ECO:0000255" key="1"/>
<evidence type="ECO:0000256" key="2">
    <source>
        <dbReference type="SAM" id="MobiDB-lite"/>
    </source>
</evidence>
<evidence type="ECO:0000305" key="3"/>
<protein>
    <recommendedName>
        <fullName>Testis-specific protein 10-interacting protein</fullName>
    </recommendedName>
    <alternativeName>
        <fullName>Tsga10-interacting protein</fullName>
    </alternativeName>
</protein>
<name>T10IP_BOVIN</name>
<feature type="chain" id="PRO_0000331422" description="Testis-specific protein 10-interacting protein">
    <location>
        <begin position="1"/>
        <end position="556"/>
    </location>
</feature>
<feature type="region of interest" description="Disordered" evidence="2">
    <location>
        <begin position="1"/>
        <end position="102"/>
    </location>
</feature>
<feature type="region of interest" description="Disordered" evidence="2">
    <location>
        <begin position="180"/>
        <end position="320"/>
    </location>
</feature>
<feature type="region of interest" description="Disordered" evidence="2">
    <location>
        <begin position="503"/>
        <end position="556"/>
    </location>
</feature>
<feature type="coiled-coil region" evidence="1">
    <location>
        <begin position="387"/>
        <end position="463"/>
    </location>
</feature>
<feature type="compositionally biased region" description="Polar residues" evidence="2">
    <location>
        <begin position="1"/>
        <end position="20"/>
    </location>
</feature>
<feature type="compositionally biased region" description="Basic residues" evidence="2">
    <location>
        <begin position="75"/>
        <end position="85"/>
    </location>
</feature>
<feature type="compositionally biased region" description="Acidic residues" evidence="2">
    <location>
        <begin position="213"/>
        <end position="225"/>
    </location>
</feature>
<feature type="compositionally biased region" description="Acidic residues" evidence="2">
    <location>
        <begin position="246"/>
        <end position="260"/>
    </location>
</feature>
<feature type="compositionally biased region" description="Basic residues" evidence="2">
    <location>
        <begin position="266"/>
        <end position="278"/>
    </location>
</feature>
<feature type="compositionally biased region" description="Basic and acidic residues" evidence="2">
    <location>
        <begin position="304"/>
        <end position="320"/>
    </location>
</feature>
<feature type="compositionally biased region" description="Polar residues" evidence="2">
    <location>
        <begin position="527"/>
        <end position="543"/>
    </location>
</feature>
<comment type="caution">
    <text evidence="3">It is uncertain whether Met-1 or Met-7 is the initiator.</text>
</comment>
<comment type="sequence caution" evidence="3">
    <conflict type="erroneous initiation">
        <sequence resource="EMBL-CDS" id="AAI40562"/>
    </conflict>
</comment>
<keyword id="KW-0175">Coiled coil</keyword>
<keyword id="KW-1185">Reference proteome</keyword>
<reference key="1">
    <citation type="submission" date="2007-04" db="EMBL/GenBank/DDBJ databases">
        <authorList>
            <consortium name="NIH - Mammalian Gene Collection (MGC) project"/>
        </authorList>
    </citation>
    <scope>NUCLEOTIDE SEQUENCE [LARGE SCALE MRNA]</scope>
    <source>
        <strain>Hereford</strain>
        <tissue>Brain cortex</tissue>
    </source>
</reference>
<organism>
    <name type="scientific">Bos taurus</name>
    <name type="common">Bovine</name>
    <dbReference type="NCBI Taxonomy" id="9913"/>
    <lineage>
        <taxon>Eukaryota</taxon>
        <taxon>Metazoa</taxon>
        <taxon>Chordata</taxon>
        <taxon>Craniata</taxon>
        <taxon>Vertebrata</taxon>
        <taxon>Euteleostomi</taxon>
        <taxon>Mammalia</taxon>
        <taxon>Eutheria</taxon>
        <taxon>Laurasiatheria</taxon>
        <taxon>Artiodactyla</taxon>
        <taxon>Ruminantia</taxon>
        <taxon>Pecora</taxon>
        <taxon>Bovidae</taxon>
        <taxon>Bovinae</taxon>
        <taxon>Bos</taxon>
    </lineage>
</organism>
<dbReference type="EMBL" id="BC140561">
    <property type="protein sequence ID" value="AAI40562.1"/>
    <property type="status" value="ALT_INIT"/>
    <property type="molecule type" value="mRNA"/>
</dbReference>
<dbReference type="RefSeq" id="NP_001091478.2">
    <property type="nucleotide sequence ID" value="NM_001098009.2"/>
</dbReference>
<dbReference type="SMR" id="A5D7I0"/>
<dbReference type="FunCoup" id="A5D7I0">
    <property type="interactions" value="3"/>
</dbReference>
<dbReference type="STRING" id="9913.ENSBTAP00000071879"/>
<dbReference type="PaxDb" id="9913-ENSBTAP00000004024"/>
<dbReference type="Ensembl" id="ENSBTAT00000004024.6">
    <property type="protein sequence ID" value="ENSBTAP00000004024.4"/>
    <property type="gene ID" value="ENSBTAG00000003093.6"/>
</dbReference>
<dbReference type="GeneID" id="510521"/>
<dbReference type="KEGG" id="bta:510521"/>
<dbReference type="CTD" id="254187"/>
<dbReference type="VEuPathDB" id="HostDB:ENSBTAG00000003093"/>
<dbReference type="VGNC" id="VGNC:36416">
    <property type="gene designation" value="TSGA10IP"/>
</dbReference>
<dbReference type="eggNOG" id="ENOG502S4NS">
    <property type="taxonomic scope" value="Eukaryota"/>
</dbReference>
<dbReference type="GeneTree" id="ENSGT00390000008351"/>
<dbReference type="HOGENOM" id="CLU_037959_0_0_1"/>
<dbReference type="InParanoid" id="A5D7I0"/>
<dbReference type="OMA" id="DCGPQKQ"/>
<dbReference type="OrthoDB" id="9897099at2759"/>
<dbReference type="TreeFam" id="TF321199"/>
<dbReference type="Proteomes" id="UP000009136">
    <property type="component" value="Chromosome 29"/>
</dbReference>
<dbReference type="Bgee" id="ENSBTAG00000003093">
    <property type="expression patterns" value="Expressed in semen and 36 other cell types or tissues"/>
</dbReference>
<dbReference type="GO" id="GO:0005856">
    <property type="term" value="C:cytoskeleton"/>
    <property type="evidence" value="ECO:0007669"/>
    <property type="project" value="UniProtKB-ARBA"/>
</dbReference>
<dbReference type="GO" id="GO:0032391">
    <property type="term" value="C:photoreceptor connecting cilium"/>
    <property type="evidence" value="ECO:0000318"/>
    <property type="project" value="GO_Central"/>
</dbReference>
<dbReference type="GO" id="GO:0044782">
    <property type="term" value="P:cilium organization"/>
    <property type="evidence" value="ECO:0000318"/>
    <property type="project" value="GO_Central"/>
</dbReference>
<dbReference type="InterPro" id="IPR051655">
    <property type="entry name" value="FAM161"/>
</dbReference>
<dbReference type="PANTHER" id="PTHR21501">
    <property type="entry name" value="PROTEIN FAM-161"/>
    <property type="match status" value="1"/>
</dbReference>
<dbReference type="PANTHER" id="PTHR21501:SF5">
    <property type="entry name" value="TESTIS-SPECIFIC PROTEIN 10-INTERACTING PROTEIN"/>
    <property type="match status" value="1"/>
</dbReference>
<accession>A5D7I0</accession>